<reference key="1">
    <citation type="submission" date="2007-11" db="EMBL/GenBank/DDBJ databases">
        <title>Genome sequencing of phylogenetically and phenotypically diverse Coxiella burnetii isolates.</title>
        <authorList>
            <person name="Seshadri R."/>
            <person name="Samuel J.E."/>
        </authorList>
    </citation>
    <scope>NUCLEOTIDE SEQUENCE [LARGE SCALE GENOMIC DNA]</scope>
    <source>
        <strain>RSA 331 / Henzerling II</strain>
    </source>
</reference>
<gene>
    <name evidence="1" type="primary">rpsP</name>
    <name type="ordered locus">COXBURSA331_A0552</name>
</gene>
<organism>
    <name type="scientific">Coxiella burnetii (strain RSA 331 / Henzerling II)</name>
    <dbReference type="NCBI Taxonomy" id="360115"/>
    <lineage>
        <taxon>Bacteria</taxon>
        <taxon>Pseudomonadati</taxon>
        <taxon>Pseudomonadota</taxon>
        <taxon>Gammaproteobacteria</taxon>
        <taxon>Legionellales</taxon>
        <taxon>Coxiellaceae</taxon>
        <taxon>Coxiella</taxon>
    </lineage>
</organism>
<name>RS16_COXBR</name>
<keyword id="KW-0687">Ribonucleoprotein</keyword>
<keyword id="KW-0689">Ribosomal protein</keyword>
<accession>A9NBR1</accession>
<comment type="similarity">
    <text evidence="1">Belongs to the bacterial ribosomal protein bS16 family.</text>
</comment>
<dbReference type="EMBL" id="CP000890">
    <property type="protein sequence ID" value="ABX78284.1"/>
    <property type="molecule type" value="Genomic_DNA"/>
</dbReference>
<dbReference type="SMR" id="A9NBR1"/>
<dbReference type="KEGG" id="cbs:COXBURSA331_A0552"/>
<dbReference type="HOGENOM" id="CLU_100590_3_0_6"/>
<dbReference type="GO" id="GO:0005737">
    <property type="term" value="C:cytoplasm"/>
    <property type="evidence" value="ECO:0007669"/>
    <property type="project" value="UniProtKB-ARBA"/>
</dbReference>
<dbReference type="GO" id="GO:0015935">
    <property type="term" value="C:small ribosomal subunit"/>
    <property type="evidence" value="ECO:0007669"/>
    <property type="project" value="TreeGrafter"/>
</dbReference>
<dbReference type="GO" id="GO:0003735">
    <property type="term" value="F:structural constituent of ribosome"/>
    <property type="evidence" value="ECO:0007669"/>
    <property type="project" value="InterPro"/>
</dbReference>
<dbReference type="GO" id="GO:0006412">
    <property type="term" value="P:translation"/>
    <property type="evidence" value="ECO:0007669"/>
    <property type="project" value="UniProtKB-UniRule"/>
</dbReference>
<dbReference type="Gene3D" id="3.30.1320.10">
    <property type="match status" value="1"/>
</dbReference>
<dbReference type="HAMAP" id="MF_00385">
    <property type="entry name" value="Ribosomal_bS16"/>
    <property type="match status" value="1"/>
</dbReference>
<dbReference type="InterPro" id="IPR000307">
    <property type="entry name" value="Ribosomal_bS16"/>
</dbReference>
<dbReference type="InterPro" id="IPR023803">
    <property type="entry name" value="Ribosomal_bS16_dom_sf"/>
</dbReference>
<dbReference type="NCBIfam" id="TIGR00002">
    <property type="entry name" value="S16"/>
    <property type="match status" value="1"/>
</dbReference>
<dbReference type="PANTHER" id="PTHR12919">
    <property type="entry name" value="30S RIBOSOMAL PROTEIN S16"/>
    <property type="match status" value="1"/>
</dbReference>
<dbReference type="PANTHER" id="PTHR12919:SF20">
    <property type="entry name" value="SMALL RIBOSOMAL SUBUNIT PROTEIN BS16M"/>
    <property type="match status" value="1"/>
</dbReference>
<dbReference type="Pfam" id="PF00886">
    <property type="entry name" value="Ribosomal_S16"/>
    <property type="match status" value="1"/>
</dbReference>
<dbReference type="SUPFAM" id="SSF54565">
    <property type="entry name" value="Ribosomal protein S16"/>
    <property type="match status" value="1"/>
</dbReference>
<feature type="chain" id="PRO_1000080146" description="Small ribosomal subunit protein bS16">
    <location>
        <begin position="1"/>
        <end position="137"/>
    </location>
</feature>
<feature type="region of interest" description="Disordered" evidence="2">
    <location>
        <begin position="80"/>
        <end position="137"/>
    </location>
</feature>
<feature type="compositionally biased region" description="Basic and acidic residues" evidence="2">
    <location>
        <begin position="80"/>
        <end position="99"/>
    </location>
</feature>
<feature type="compositionally biased region" description="Basic and acidic residues" evidence="2">
    <location>
        <begin position="111"/>
        <end position="125"/>
    </location>
</feature>
<feature type="compositionally biased region" description="Low complexity" evidence="2">
    <location>
        <begin position="126"/>
        <end position="137"/>
    </location>
</feature>
<evidence type="ECO:0000255" key="1">
    <source>
        <dbReference type="HAMAP-Rule" id="MF_00385"/>
    </source>
</evidence>
<evidence type="ECO:0000256" key="2">
    <source>
        <dbReference type="SAM" id="MobiDB-lite"/>
    </source>
</evidence>
<evidence type="ECO:0000305" key="3"/>
<sequence length="137" mass="15560">MVVIRLARGGSKKNPFYHIVVADRRKPRDGRFIERVGYYNPMARGQDIRLQLEKERISHWLNQGAQTSLRVKHLIKKLEKSPEEAQKGGMRKGEFKRLQAEQAAKAQKKAVATEEPKAEEAKEAPPAESQAAEGKEE</sequence>
<protein>
    <recommendedName>
        <fullName evidence="1">Small ribosomal subunit protein bS16</fullName>
    </recommendedName>
    <alternativeName>
        <fullName evidence="3">30S ribosomal protein S16</fullName>
    </alternativeName>
</protein>
<proteinExistence type="inferred from homology"/>